<keyword id="KW-0067">ATP-binding</keyword>
<keyword id="KW-0963">Cytoplasm</keyword>
<keyword id="KW-0547">Nucleotide-binding</keyword>
<keyword id="KW-1185">Reference proteome</keyword>
<keyword id="KW-0694">RNA-binding</keyword>
<keyword id="KW-0784">Thiamine biosynthesis</keyword>
<keyword id="KW-0808">Transferase</keyword>
<keyword id="KW-0820">tRNA-binding</keyword>
<name>THII_HALSA</name>
<feature type="chain" id="PRO_0000154892" description="Probable tRNA sulfurtransferase">
    <location>
        <begin position="1"/>
        <end position="392"/>
    </location>
</feature>
<feature type="domain" description="THUMP" evidence="1">
    <location>
        <begin position="63"/>
        <end position="169"/>
    </location>
</feature>
<feature type="binding site" evidence="1">
    <location>
        <begin position="187"/>
        <end position="188"/>
    </location>
    <ligand>
        <name>ATP</name>
        <dbReference type="ChEBI" id="CHEBI:30616"/>
    </ligand>
</feature>
<feature type="binding site" evidence="1">
    <location>
        <position position="270"/>
    </location>
    <ligand>
        <name>ATP</name>
        <dbReference type="ChEBI" id="CHEBI:30616"/>
    </ligand>
</feature>
<feature type="binding site" evidence="1">
    <location>
        <position position="292"/>
    </location>
    <ligand>
        <name>ATP</name>
        <dbReference type="ChEBI" id="CHEBI:30616"/>
    </ligand>
</feature>
<feature type="binding site" evidence="1">
    <location>
        <position position="301"/>
    </location>
    <ligand>
        <name>ATP</name>
        <dbReference type="ChEBI" id="CHEBI:30616"/>
    </ligand>
</feature>
<reference key="1">
    <citation type="journal article" date="2000" name="Proc. Natl. Acad. Sci. U.S.A.">
        <title>Genome sequence of Halobacterium species NRC-1.</title>
        <authorList>
            <person name="Ng W.V."/>
            <person name="Kennedy S.P."/>
            <person name="Mahairas G.G."/>
            <person name="Berquist B."/>
            <person name="Pan M."/>
            <person name="Shukla H.D."/>
            <person name="Lasky S.R."/>
            <person name="Baliga N.S."/>
            <person name="Thorsson V."/>
            <person name="Sbrogna J."/>
            <person name="Swartzell S."/>
            <person name="Weir D."/>
            <person name="Hall J."/>
            <person name="Dahl T.A."/>
            <person name="Welti R."/>
            <person name="Goo Y.A."/>
            <person name="Leithauser B."/>
            <person name="Keller K."/>
            <person name="Cruz R."/>
            <person name="Danson M.J."/>
            <person name="Hough D.W."/>
            <person name="Maddocks D.G."/>
            <person name="Jablonski P.E."/>
            <person name="Krebs M.P."/>
            <person name="Angevine C.M."/>
            <person name="Dale H."/>
            <person name="Isenbarger T.A."/>
            <person name="Peck R.F."/>
            <person name="Pohlschroder M."/>
            <person name="Spudich J.L."/>
            <person name="Jung K.-H."/>
            <person name="Alam M."/>
            <person name="Freitas T."/>
            <person name="Hou S."/>
            <person name="Daniels C.J."/>
            <person name="Dennis P.P."/>
            <person name="Omer A.D."/>
            <person name="Ebhardt H."/>
            <person name="Lowe T.M."/>
            <person name="Liang P."/>
            <person name="Riley M."/>
            <person name="Hood L."/>
            <person name="DasSarma S."/>
        </authorList>
    </citation>
    <scope>NUCLEOTIDE SEQUENCE [LARGE SCALE GENOMIC DNA]</scope>
    <source>
        <strain>ATCC 700922 / JCM 11081 / NRC-1</strain>
    </source>
</reference>
<accession>Q9HQ72</accession>
<gene>
    <name evidence="1" type="primary">thiI</name>
    <name type="ordered locus">VNG_1299C</name>
</gene>
<sequence>MLPPGADSVVVRHGDVGVKSSHVQSDMERTLRDNVAAMLADRGVPGDVEREWGRVLVRSPAPGRAADAAADTFGVVSASPAVSVAPDLDAISDALAAAARAHYDGGAFAVDARRAGTHDFDSHDVNRVGGDAVWAAVEDDFQPVVDLDDPDITFFVEVRDAEAFVFLTHRDGPGGMPLGTQQPLVALVSGGIDSPVAAWESMRRGAPVIPLYLALGDYGGPDHRARAEAAVRTLDDYAPNHDLSLRVAPAGDAIDRLAAATGRTRMLSFRRFMYRVAEHVAEHAGAAGIVTGEAVGQKSSQTTANLGVVDRATTLPVHRPLLTWDKQRITAAARSIDTFRDSSLDVGCNRLAPRQPLTAAPIESVRADEPDALFEWARAVAADTGPVEVAVA</sequence>
<dbReference type="EC" id="2.8.1.4" evidence="1"/>
<dbReference type="EMBL" id="AE004437">
    <property type="protein sequence ID" value="AAG19645.1"/>
    <property type="molecule type" value="Genomic_DNA"/>
</dbReference>
<dbReference type="PIR" id="A84285">
    <property type="entry name" value="A84285"/>
</dbReference>
<dbReference type="RefSeq" id="WP_010902941.1">
    <property type="nucleotide sequence ID" value="NC_002607.1"/>
</dbReference>
<dbReference type="SMR" id="Q9HQ72"/>
<dbReference type="FunCoup" id="Q9HQ72">
    <property type="interactions" value="68"/>
</dbReference>
<dbReference type="STRING" id="64091.VNG_1299C"/>
<dbReference type="PaxDb" id="64091-VNG_1299C"/>
<dbReference type="KEGG" id="hal:VNG_1299C"/>
<dbReference type="PATRIC" id="fig|64091.14.peg.993"/>
<dbReference type="HOGENOM" id="CLU_037952_4_0_2"/>
<dbReference type="InParanoid" id="Q9HQ72"/>
<dbReference type="OrthoDB" id="372227at2157"/>
<dbReference type="PhylomeDB" id="Q9HQ72"/>
<dbReference type="UniPathway" id="UPA00060"/>
<dbReference type="Proteomes" id="UP000000554">
    <property type="component" value="Chromosome"/>
</dbReference>
<dbReference type="GO" id="GO:0005829">
    <property type="term" value="C:cytosol"/>
    <property type="evidence" value="ECO:0000318"/>
    <property type="project" value="GO_Central"/>
</dbReference>
<dbReference type="GO" id="GO:0005524">
    <property type="term" value="F:ATP binding"/>
    <property type="evidence" value="ECO:0007669"/>
    <property type="project" value="UniProtKB-UniRule"/>
</dbReference>
<dbReference type="GO" id="GO:0004810">
    <property type="term" value="F:CCA tRNA nucleotidyltransferase activity"/>
    <property type="evidence" value="ECO:0007669"/>
    <property type="project" value="InterPro"/>
</dbReference>
<dbReference type="GO" id="GO:0000049">
    <property type="term" value="F:tRNA binding"/>
    <property type="evidence" value="ECO:0007669"/>
    <property type="project" value="UniProtKB-UniRule"/>
</dbReference>
<dbReference type="GO" id="GO:0140741">
    <property type="term" value="F:tRNA-uracil-4 sulfurtransferase activity"/>
    <property type="evidence" value="ECO:0007669"/>
    <property type="project" value="UniProtKB-EC"/>
</dbReference>
<dbReference type="GO" id="GO:0009228">
    <property type="term" value="P:thiamine biosynthetic process"/>
    <property type="evidence" value="ECO:0007669"/>
    <property type="project" value="UniProtKB-KW"/>
</dbReference>
<dbReference type="GO" id="GO:0009229">
    <property type="term" value="P:thiamine diphosphate biosynthetic process"/>
    <property type="evidence" value="ECO:0007669"/>
    <property type="project" value="UniProtKB-UniRule"/>
</dbReference>
<dbReference type="GO" id="GO:0052837">
    <property type="term" value="P:thiazole biosynthetic process"/>
    <property type="evidence" value="ECO:0000318"/>
    <property type="project" value="GO_Central"/>
</dbReference>
<dbReference type="GO" id="GO:0002937">
    <property type="term" value="P:tRNA 4-thiouridine biosynthesis"/>
    <property type="evidence" value="ECO:0000318"/>
    <property type="project" value="GO_Central"/>
</dbReference>
<dbReference type="CDD" id="cd01712">
    <property type="entry name" value="PPase_ThiI"/>
    <property type="match status" value="1"/>
</dbReference>
<dbReference type="CDD" id="cd11716">
    <property type="entry name" value="THUMP_ThiI"/>
    <property type="match status" value="1"/>
</dbReference>
<dbReference type="FunFam" id="3.40.50.620:FF:000456">
    <property type="entry name" value="Probable tRNA sulfurtransferase"/>
    <property type="match status" value="1"/>
</dbReference>
<dbReference type="Gene3D" id="3.30.2130.30">
    <property type="match status" value="1"/>
</dbReference>
<dbReference type="Gene3D" id="3.40.50.620">
    <property type="entry name" value="HUPs"/>
    <property type="match status" value="1"/>
</dbReference>
<dbReference type="HAMAP" id="MF_00021">
    <property type="entry name" value="ThiI"/>
    <property type="match status" value="1"/>
</dbReference>
<dbReference type="InterPro" id="IPR014729">
    <property type="entry name" value="Rossmann-like_a/b/a_fold"/>
</dbReference>
<dbReference type="InterPro" id="IPR020536">
    <property type="entry name" value="ThiI_AANH"/>
</dbReference>
<dbReference type="InterPro" id="IPR054173">
    <property type="entry name" value="ThiI_fer"/>
</dbReference>
<dbReference type="InterPro" id="IPR004114">
    <property type="entry name" value="THUMP_dom"/>
</dbReference>
<dbReference type="InterPro" id="IPR049962">
    <property type="entry name" value="THUMP_ThiI"/>
</dbReference>
<dbReference type="InterPro" id="IPR003720">
    <property type="entry name" value="tRNA_STrfase"/>
</dbReference>
<dbReference type="InterPro" id="IPR050102">
    <property type="entry name" value="tRNA_sulfurtransferase_ThiI"/>
</dbReference>
<dbReference type="PANTHER" id="PTHR43209">
    <property type="entry name" value="TRNA SULFURTRANSFERASE"/>
    <property type="match status" value="1"/>
</dbReference>
<dbReference type="PANTHER" id="PTHR43209:SF1">
    <property type="entry name" value="TRNA SULFURTRANSFERASE"/>
    <property type="match status" value="1"/>
</dbReference>
<dbReference type="Pfam" id="PF02568">
    <property type="entry name" value="ThiI"/>
    <property type="match status" value="1"/>
</dbReference>
<dbReference type="Pfam" id="PF22025">
    <property type="entry name" value="ThiI_fer"/>
    <property type="match status" value="1"/>
</dbReference>
<dbReference type="Pfam" id="PF02926">
    <property type="entry name" value="THUMP"/>
    <property type="match status" value="1"/>
</dbReference>
<dbReference type="SMART" id="SM00981">
    <property type="entry name" value="THUMP"/>
    <property type="match status" value="1"/>
</dbReference>
<dbReference type="SUPFAM" id="SSF52402">
    <property type="entry name" value="Adenine nucleotide alpha hydrolases-like"/>
    <property type="match status" value="1"/>
</dbReference>
<dbReference type="SUPFAM" id="SSF143437">
    <property type="entry name" value="THUMP domain-like"/>
    <property type="match status" value="1"/>
</dbReference>
<dbReference type="PROSITE" id="PS51165">
    <property type="entry name" value="THUMP"/>
    <property type="match status" value="1"/>
</dbReference>
<proteinExistence type="inferred from homology"/>
<comment type="function">
    <text evidence="1">Catalyzes the ATP-dependent transfer of a sulfur to tRNA to produce 4-thiouridine in position 8 of tRNAs, which functions as a near-UV photosensor. Also catalyzes the transfer of sulfur to the sulfur carrier protein ThiS, forming ThiS-thiocarboxylate. This is a step in the synthesis of thiazole, in the thiamine biosynthesis pathway. The sulfur is donated as persulfide by IscS.</text>
</comment>
<comment type="catalytic activity">
    <reaction evidence="1">
        <text>[ThiI sulfur-carrier protein]-S-sulfanyl-L-cysteine + a uridine in tRNA + 2 reduced [2Fe-2S]-[ferredoxin] + ATP + H(+) = [ThiI sulfur-carrier protein]-L-cysteine + a 4-thiouridine in tRNA + 2 oxidized [2Fe-2S]-[ferredoxin] + AMP + diphosphate</text>
        <dbReference type="Rhea" id="RHEA:24176"/>
        <dbReference type="Rhea" id="RHEA-COMP:10000"/>
        <dbReference type="Rhea" id="RHEA-COMP:10001"/>
        <dbReference type="Rhea" id="RHEA-COMP:13337"/>
        <dbReference type="Rhea" id="RHEA-COMP:13338"/>
        <dbReference type="Rhea" id="RHEA-COMP:13339"/>
        <dbReference type="Rhea" id="RHEA-COMP:13340"/>
        <dbReference type="ChEBI" id="CHEBI:15378"/>
        <dbReference type="ChEBI" id="CHEBI:29950"/>
        <dbReference type="ChEBI" id="CHEBI:30616"/>
        <dbReference type="ChEBI" id="CHEBI:33019"/>
        <dbReference type="ChEBI" id="CHEBI:33737"/>
        <dbReference type="ChEBI" id="CHEBI:33738"/>
        <dbReference type="ChEBI" id="CHEBI:61963"/>
        <dbReference type="ChEBI" id="CHEBI:65315"/>
        <dbReference type="ChEBI" id="CHEBI:136798"/>
        <dbReference type="ChEBI" id="CHEBI:456215"/>
        <dbReference type="EC" id="2.8.1.4"/>
    </reaction>
</comment>
<comment type="catalytic activity">
    <reaction evidence="1">
        <text>[ThiS sulfur-carrier protein]-C-terminal Gly-Gly-AMP + S-sulfanyl-L-cysteinyl-[cysteine desulfurase] + AH2 = [ThiS sulfur-carrier protein]-C-terminal-Gly-aminoethanethioate + L-cysteinyl-[cysteine desulfurase] + A + AMP + 2 H(+)</text>
        <dbReference type="Rhea" id="RHEA:43340"/>
        <dbReference type="Rhea" id="RHEA-COMP:12157"/>
        <dbReference type="Rhea" id="RHEA-COMP:12158"/>
        <dbReference type="Rhea" id="RHEA-COMP:12910"/>
        <dbReference type="Rhea" id="RHEA-COMP:19908"/>
        <dbReference type="ChEBI" id="CHEBI:13193"/>
        <dbReference type="ChEBI" id="CHEBI:15378"/>
        <dbReference type="ChEBI" id="CHEBI:17499"/>
        <dbReference type="ChEBI" id="CHEBI:29950"/>
        <dbReference type="ChEBI" id="CHEBI:61963"/>
        <dbReference type="ChEBI" id="CHEBI:90618"/>
        <dbReference type="ChEBI" id="CHEBI:232372"/>
        <dbReference type="ChEBI" id="CHEBI:456215"/>
    </reaction>
</comment>
<comment type="pathway">
    <text evidence="1">Cofactor biosynthesis; thiamine diphosphate biosynthesis.</text>
</comment>
<comment type="subcellular location">
    <subcellularLocation>
        <location evidence="1">Cytoplasm</location>
    </subcellularLocation>
</comment>
<comment type="similarity">
    <text evidence="1">Belongs to the ThiI family.</text>
</comment>
<evidence type="ECO:0000255" key="1">
    <source>
        <dbReference type="HAMAP-Rule" id="MF_00021"/>
    </source>
</evidence>
<organism>
    <name type="scientific">Halobacterium salinarum (strain ATCC 700922 / JCM 11081 / NRC-1)</name>
    <name type="common">Halobacterium halobium</name>
    <dbReference type="NCBI Taxonomy" id="64091"/>
    <lineage>
        <taxon>Archaea</taxon>
        <taxon>Methanobacteriati</taxon>
        <taxon>Methanobacteriota</taxon>
        <taxon>Stenosarchaea group</taxon>
        <taxon>Halobacteria</taxon>
        <taxon>Halobacteriales</taxon>
        <taxon>Halobacteriaceae</taxon>
        <taxon>Halobacterium</taxon>
        <taxon>Halobacterium salinarum NRC-34001</taxon>
    </lineage>
</organism>
<protein>
    <recommendedName>
        <fullName evidence="1">Probable tRNA sulfurtransferase</fullName>
        <ecNumber evidence="1">2.8.1.4</ecNumber>
    </recommendedName>
    <alternativeName>
        <fullName evidence="1">Sulfur carrier protein ThiS sulfurtransferase</fullName>
    </alternativeName>
    <alternativeName>
        <fullName evidence="1">Thiamine biosynthesis protein ThiI</fullName>
    </alternativeName>
    <alternativeName>
        <fullName evidence="1">tRNA 4-thiouridine synthase</fullName>
    </alternativeName>
</protein>